<reference key="1">
    <citation type="journal article" date="1982" name="Gene">
        <title>The complete nucleotide sequence of the duck alpha A-globin gene.</title>
        <authorList>
            <person name="Erbil C."/>
            <person name="Niessing J."/>
        </authorList>
    </citation>
    <scope>NUCLEOTIDE SEQUENCE [GENOMIC DNA]</scope>
</reference>
<sequence length="142" mass="15420">MVLSAADKTNVKGVFSKIGGHAEEYGAETLERMFIAYPQTKTYFPHFDLQHGSAQIKAHGKKVAAALVEAVNHIDDIAGALSKLSDLHAQKLRVDPVNFKFLGHCFLVVVAIHHPAALTPEVHASLDKFMCAVGAVLTAKYR</sequence>
<comment type="function">
    <text>Involved in oxygen transport from the lung to the various peripheral tissues.</text>
</comment>
<comment type="subunit">
    <text>Heterotetramer of two alpha chains and two beta chains.</text>
</comment>
<comment type="tissue specificity">
    <text>Red blood cells.</text>
</comment>
<comment type="similarity">
    <text evidence="1">Belongs to the globin family.</text>
</comment>
<name>HBA_CAIMO</name>
<organism>
    <name type="scientific">Cairina moschata</name>
    <name type="common">Muscovy duck</name>
    <dbReference type="NCBI Taxonomy" id="8855"/>
    <lineage>
        <taxon>Eukaryota</taxon>
        <taxon>Metazoa</taxon>
        <taxon>Chordata</taxon>
        <taxon>Craniata</taxon>
        <taxon>Vertebrata</taxon>
        <taxon>Euteleostomi</taxon>
        <taxon>Archelosauria</taxon>
        <taxon>Archosauria</taxon>
        <taxon>Dinosauria</taxon>
        <taxon>Saurischia</taxon>
        <taxon>Theropoda</taxon>
        <taxon>Coelurosauria</taxon>
        <taxon>Aves</taxon>
        <taxon>Neognathae</taxon>
        <taxon>Galloanserae</taxon>
        <taxon>Anseriformes</taxon>
        <taxon>Anatidae</taxon>
        <taxon>Anatinae</taxon>
        <taxon>Cairina</taxon>
    </lineage>
</organism>
<keyword id="KW-0349">Heme</keyword>
<keyword id="KW-0408">Iron</keyword>
<keyword id="KW-0479">Metal-binding</keyword>
<keyword id="KW-0561">Oxygen transport</keyword>
<keyword id="KW-1185">Reference proteome</keyword>
<keyword id="KW-0813">Transport</keyword>
<evidence type="ECO:0000255" key="1">
    <source>
        <dbReference type="PROSITE-ProRule" id="PRU00238"/>
    </source>
</evidence>
<dbReference type="EMBL" id="J00923">
    <property type="protein sequence ID" value="AAA49148.1"/>
    <property type="molecule type" value="Genomic_DNA"/>
</dbReference>
<dbReference type="PIR" id="A91496">
    <property type="entry name" value="HADKAY"/>
</dbReference>
<dbReference type="SMR" id="P01987"/>
<dbReference type="Proteomes" id="UP000694556">
    <property type="component" value="Unplaced"/>
</dbReference>
<dbReference type="GO" id="GO:0072562">
    <property type="term" value="C:blood microparticle"/>
    <property type="evidence" value="ECO:0007669"/>
    <property type="project" value="TreeGrafter"/>
</dbReference>
<dbReference type="GO" id="GO:0031838">
    <property type="term" value="C:haptoglobin-hemoglobin complex"/>
    <property type="evidence" value="ECO:0007669"/>
    <property type="project" value="TreeGrafter"/>
</dbReference>
<dbReference type="GO" id="GO:0005833">
    <property type="term" value="C:hemoglobin complex"/>
    <property type="evidence" value="ECO:0007669"/>
    <property type="project" value="InterPro"/>
</dbReference>
<dbReference type="GO" id="GO:0031720">
    <property type="term" value="F:haptoglobin binding"/>
    <property type="evidence" value="ECO:0007669"/>
    <property type="project" value="TreeGrafter"/>
</dbReference>
<dbReference type="GO" id="GO:0020037">
    <property type="term" value="F:heme binding"/>
    <property type="evidence" value="ECO:0007669"/>
    <property type="project" value="InterPro"/>
</dbReference>
<dbReference type="GO" id="GO:0005506">
    <property type="term" value="F:iron ion binding"/>
    <property type="evidence" value="ECO:0007669"/>
    <property type="project" value="InterPro"/>
</dbReference>
<dbReference type="GO" id="GO:0043177">
    <property type="term" value="F:organic acid binding"/>
    <property type="evidence" value="ECO:0007669"/>
    <property type="project" value="TreeGrafter"/>
</dbReference>
<dbReference type="GO" id="GO:0019825">
    <property type="term" value="F:oxygen binding"/>
    <property type="evidence" value="ECO:0007669"/>
    <property type="project" value="InterPro"/>
</dbReference>
<dbReference type="GO" id="GO:0005344">
    <property type="term" value="F:oxygen carrier activity"/>
    <property type="evidence" value="ECO:0007669"/>
    <property type="project" value="UniProtKB-KW"/>
</dbReference>
<dbReference type="GO" id="GO:0004601">
    <property type="term" value="F:peroxidase activity"/>
    <property type="evidence" value="ECO:0007669"/>
    <property type="project" value="TreeGrafter"/>
</dbReference>
<dbReference type="GO" id="GO:0042744">
    <property type="term" value="P:hydrogen peroxide catabolic process"/>
    <property type="evidence" value="ECO:0007669"/>
    <property type="project" value="TreeGrafter"/>
</dbReference>
<dbReference type="CDD" id="cd08927">
    <property type="entry name" value="Hb-alpha-like"/>
    <property type="match status" value="1"/>
</dbReference>
<dbReference type="FunFam" id="1.10.490.10:FF:000002">
    <property type="entry name" value="Hemoglobin subunit alpha"/>
    <property type="match status" value="1"/>
</dbReference>
<dbReference type="Gene3D" id="1.10.490.10">
    <property type="entry name" value="Globins"/>
    <property type="match status" value="1"/>
</dbReference>
<dbReference type="InterPro" id="IPR000971">
    <property type="entry name" value="Globin"/>
</dbReference>
<dbReference type="InterPro" id="IPR009050">
    <property type="entry name" value="Globin-like_sf"/>
</dbReference>
<dbReference type="InterPro" id="IPR012292">
    <property type="entry name" value="Globin/Proto"/>
</dbReference>
<dbReference type="InterPro" id="IPR002338">
    <property type="entry name" value="Hemoglobin_a-typ"/>
</dbReference>
<dbReference type="InterPro" id="IPR050056">
    <property type="entry name" value="Hemoglobin_oxygen_transport"/>
</dbReference>
<dbReference type="InterPro" id="IPR002339">
    <property type="entry name" value="Hemoglobin_pi"/>
</dbReference>
<dbReference type="PANTHER" id="PTHR11442">
    <property type="entry name" value="HEMOGLOBIN FAMILY MEMBER"/>
    <property type="match status" value="1"/>
</dbReference>
<dbReference type="PANTHER" id="PTHR11442:SF48">
    <property type="entry name" value="HEMOGLOBIN SUBUNIT ALPHA"/>
    <property type="match status" value="1"/>
</dbReference>
<dbReference type="Pfam" id="PF00042">
    <property type="entry name" value="Globin"/>
    <property type="match status" value="1"/>
</dbReference>
<dbReference type="PRINTS" id="PR00612">
    <property type="entry name" value="ALPHAHAEM"/>
</dbReference>
<dbReference type="PRINTS" id="PR00815">
    <property type="entry name" value="PIHAEM"/>
</dbReference>
<dbReference type="SUPFAM" id="SSF46458">
    <property type="entry name" value="Globin-like"/>
    <property type="match status" value="1"/>
</dbReference>
<dbReference type="PROSITE" id="PS01033">
    <property type="entry name" value="GLOBIN"/>
    <property type="match status" value="1"/>
</dbReference>
<proteinExistence type="evidence at transcript level"/>
<feature type="initiator methionine" description="Removed">
    <location>
        <position position="1"/>
    </location>
</feature>
<feature type="chain" id="PRO_0000052576" description="Hemoglobin subunit alpha-A">
    <location>
        <begin position="2"/>
        <end position="142"/>
    </location>
</feature>
<feature type="domain" description="Globin" evidence="1">
    <location>
        <begin position="2"/>
        <end position="142"/>
    </location>
</feature>
<feature type="binding site" evidence="1">
    <location>
        <position position="59"/>
    </location>
    <ligand>
        <name>O2</name>
        <dbReference type="ChEBI" id="CHEBI:15379"/>
    </ligand>
</feature>
<feature type="binding site" description="proximal binding residue" evidence="1">
    <location>
        <position position="88"/>
    </location>
    <ligand>
        <name>heme b</name>
        <dbReference type="ChEBI" id="CHEBI:60344"/>
    </ligand>
    <ligandPart>
        <name>Fe</name>
        <dbReference type="ChEBI" id="CHEBI:18248"/>
    </ligandPart>
</feature>
<protein>
    <recommendedName>
        <fullName>Hemoglobin subunit alpha-A</fullName>
    </recommendedName>
    <alternativeName>
        <fullName>Alpha-A-globin</fullName>
    </alternativeName>
    <alternativeName>
        <fullName>Hemoglobin alpha-A chain</fullName>
    </alternativeName>
</protein>
<gene>
    <name type="primary">HBAA</name>
</gene>
<accession>P01987</accession>